<feature type="chain" id="PRO_0000133109" description="Replication protein E1">
    <location>
        <begin position="1"/>
        <end position="649"/>
    </location>
</feature>
<feature type="domain" description="SF3 helicase" evidence="1">
    <location>
        <begin position="452"/>
        <end position="602"/>
    </location>
</feature>
<feature type="region of interest" description="Disordered" evidence="2">
    <location>
        <begin position="146"/>
        <end position="188"/>
    </location>
</feature>
<feature type="region of interest" description="DNA-binding region" evidence="1">
    <location>
        <begin position="187"/>
        <end position="353"/>
    </location>
</feature>
<feature type="short sequence motif" description="Nuclear localization signal" evidence="1">
    <location>
        <begin position="83"/>
        <end position="85"/>
    </location>
</feature>
<feature type="short sequence motif" description="Nuclear export signal" evidence="1 3">
    <location>
        <begin position="106"/>
        <end position="115"/>
    </location>
</feature>
<feature type="compositionally biased region" description="Basic and acidic residues" evidence="2">
    <location>
        <begin position="148"/>
        <end position="188"/>
    </location>
</feature>
<feature type="binding site" evidence="1">
    <location>
        <begin position="478"/>
        <end position="485"/>
    </location>
    <ligand>
        <name>ATP</name>
        <dbReference type="ChEBI" id="CHEBI:30616"/>
    </ligand>
</feature>
<feature type="modified residue" description="Phosphoserine; by host" evidence="1 4">
    <location>
        <position position="89"/>
    </location>
</feature>
<feature type="modified residue" description="Phosphoserine; by host" evidence="1 4">
    <location>
        <position position="93"/>
    </location>
</feature>
<feature type="modified residue" description="Phosphoserine; by host" evidence="1 4">
    <location>
        <position position="107"/>
    </location>
</feature>
<feature type="cross-link" description="Glycyl lysine isopeptide (Lys-Gly) (interchain with G-Cter in SUMO)" evidence="1">
    <location>
        <position position="559"/>
    </location>
</feature>
<feature type="mutagenesis site" description="About 60% loss of nuclear localization." evidence="3">
    <original>S</original>
    <variation>A</variation>
    <location>
        <position position="89"/>
    </location>
</feature>
<feature type="mutagenesis site" description="About 60% loss of nuclear localization." evidence="3">
    <original>S</original>
    <variation>A</variation>
    <location>
        <position position="93"/>
    </location>
</feature>
<feature type="mutagenesis site" description="More than 80% loss of nuclear localization." evidence="3">
    <original>S</original>
    <variation>A</variation>
    <location>
        <position position="107"/>
    </location>
</feature>
<organism>
    <name type="scientific">Human papillomavirus 11</name>
    <dbReference type="NCBI Taxonomy" id="10580"/>
    <lineage>
        <taxon>Viruses</taxon>
        <taxon>Monodnaviria</taxon>
        <taxon>Shotokuvirae</taxon>
        <taxon>Cossaviricota</taxon>
        <taxon>Papovaviricetes</taxon>
        <taxon>Zurhausenvirales</taxon>
        <taxon>Papillomaviridae</taxon>
        <taxon>Firstpapillomavirinae</taxon>
        <taxon>Alphapapillomavirus</taxon>
        <taxon>Alphapapillomavirus 10</taxon>
    </lineage>
</organism>
<reference key="1">
    <citation type="journal article" date="1986" name="Virology">
        <title>The nucleotide sequence and genome organization of human papilloma virus type 11.</title>
        <authorList>
            <person name="Dartmann K."/>
            <person name="Schwarz E."/>
            <person name="Gissmann L."/>
            <person name="zur Hausen H."/>
        </authorList>
    </citation>
    <scope>NUCLEOTIDE SEQUENCE [GENOMIC DNA]</scope>
</reference>
<reference key="2">
    <citation type="journal article" date="2004" name="J. Virol.">
        <title>Cyclin/CDK regulates the nucleocytoplasmic localization of the human papillomavirus E1 DNA helicase.</title>
        <authorList>
            <person name="Deng W."/>
            <person name="Lin B.Y."/>
            <person name="Jin G."/>
            <person name="Wheeler C.G."/>
            <person name="Ma T."/>
            <person name="Harper J.W."/>
            <person name="Broker T.R."/>
            <person name="Chow L.T."/>
        </authorList>
    </citation>
    <scope>NUCLEAR EXPORT SIGNAL</scope>
    <scope>SUBCELLULAR LOCATION</scope>
    <scope>PROBABLE PHOSPHORYLATION AT SER-89; SER-93 AND SER-107</scope>
    <scope>MUTAGENESIS OF SER-89; SER-93 AND SER-107</scope>
</reference>
<dbReference type="EC" id="5.6.2.4" evidence="1"/>
<dbReference type="EMBL" id="M14119">
    <property type="protein sequence ID" value="AAA46929.1"/>
    <property type="molecule type" value="Genomic_DNA"/>
</dbReference>
<dbReference type="PIR" id="A03659">
    <property type="entry name" value="W1WL11"/>
</dbReference>
<dbReference type="SMR" id="P04014"/>
<dbReference type="IntAct" id="P04014">
    <property type="interactions" value="5"/>
</dbReference>
<dbReference type="MINT" id="P04014"/>
<dbReference type="BindingDB" id="P04014"/>
<dbReference type="ChEMBL" id="CHEMBL4953"/>
<dbReference type="BRENDA" id="3.6.4.12">
    <property type="organism ID" value="10313"/>
</dbReference>
<dbReference type="Proteomes" id="UP000008222">
    <property type="component" value="Genome"/>
</dbReference>
<dbReference type="GO" id="GO:0042025">
    <property type="term" value="C:host cell nucleus"/>
    <property type="evidence" value="ECO:0007669"/>
    <property type="project" value="UniProtKB-SubCell"/>
</dbReference>
<dbReference type="GO" id="GO:0005524">
    <property type="term" value="F:ATP binding"/>
    <property type="evidence" value="ECO:0007669"/>
    <property type="project" value="UniProtKB-UniRule"/>
</dbReference>
<dbReference type="GO" id="GO:0016887">
    <property type="term" value="F:ATP hydrolysis activity"/>
    <property type="evidence" value="ECO:0007669"/>
    <property type="project" value="RHEA"/>
</dbReference>
<dbReference type="GO" id="GO:0003677">
    <property type="term" value="F:DNA binding"/>
    <property type="evidence" value="ECO:0000314"/>
    <property type="project" value="UniProtKB"/>
</dbReference>
<dbReference type="GO" id="GO:0003678">
    <property type="term" value="F:DNA helicase activity"/>
    <property type="evidence" value="ECO:0000314"/>
    <property type="project" value="UniProtKB"/>
</dbReference>
<dbReference type="GO" id="GO:0030911">
    <property type="term" value="F:TPR domain binding"/>
    <property type="evidence" value="ECO:0000353"/>
    <property type="project" value="BHF-UCL"/>
</dbReference>
<dbReference type="GO" id="GO:0039686">
    <property type="term" value="P:bidirectional double-stranded viral DNA replication"/>
    <property type="evidence" value="ECO:0000314"/>
    <property type="project" value="UniProtKB"/>
</dbReference>
<dbReference type="GO" id="GO:0006260">
    <property type="term" value="P:DNA replication"/>
    <property type="evidence" value="ECO:0007669"/>
    <property type="project" value="UniProtKB-UniRule"/>
</dbReference>
<dbReference type="GO" id="GO:0034214">
    <property type="term" value="P:protein hexamerization"/>
    <property type="evidence" value="ECO:0000314"/>
    <property type="project" value="UniProtKB"/>
</dbReference>
<dbReference type="GO" id="GO:0039693">
    <property type="term" value="P:viral DNA genome replication"/>
    <property type="evidence" value="ECO:0000314"/>
    <property type="project" value="UniProtKB"/>
</dbReference>
<dbReference type="FunFam" id="1.10.10.510:FF:000001">
    <property type="entry name" value="Replication protein E1"/>
    <property type="match status" value="1"/>
</dbReference>
<dbReference type="FunFam" id="3.40.50.300:FF:004036">
    <property type="entry name" value="Replication protein E1"/>
    <property type="match status" value="1"/>
</dbReference>
<dbReference type="Gene3D" id="3.40.1310.10">
    <property type="match status" value="1"/>
</dbReference>
<dbReference type="Gene3D" id="3.40.50.300">
    <property type="entry name" value="P-loop containing nucleotide triphosphate hydrolases"/>
    <property type="match status" value="1"/>
</dbReference>
<dbReference type="Gene3D" id="1.10.10.510">
    <property type="entry name" value="Zinc finger, large T-antigen D1 domain"/>
    <property type="match status" value="1"/>
</dbReference>
<dbReference type="HAMAP" id="MF_04000">
    <property type="entry name" value="PPV_E1"/>
    <property type="match status" value="1"/>
</dbReference>
<dbReference type="InterPro" id="IPR014015">
    <property type="entry name" value="Helicase_SF3_DNA-vir"/>
</dbReference>
<dbReference type="InterPro" id="IPR027417">
    <property type="entry name" value="P-loop_NTPase"/>
</dbReference>
<dbReference type="InterPro" id="IPR001177">
    <property type="entry name" value="PPV_DNA_helicase_E1_C"/>
</dbReference>
<dbReference type="InterPro" id="IPR014000">
    <property type="entry name" value="PPV_DNA_helicase_E1_N"/>
</dbReference>
<dbReference type="InterPro" id="IPR046832">
    <property type="entry name" value="PPV_E1_DBD"/>
</dbReference>
<dbReference type="InterPro" id="IPR046935">
    <property type="entry name" value="PPV_E1_DBD_sf"/>
</dbReference>
<dbReference type="InterPro" id="IPR016393">
    <property type="entry name" value="Rep_E1_papillomaV"/>
</dbReference>
<dbReference type="InterPro" id="IPR037102">
    <property type="entry name" value="Znf_lg_T-Ag_D1_dom_sf"/>
</dbReference>
<dbReference type="Pfam" id="PF00519">
    <property type="entry name" value="PPV_E1_C"/>
    <property type="match status" value="1"/>
</dbReference>
<dbReference type="Pfam" id="PF20450">
    <property type="entry name" value="PPV_E1_DBD"/>
    <property type="match status" value="1"/>
</dbReference>
<dbReference type="Pfam" id="PF00524">
    <property type="entry name" value="PPV_E1_N"/>
    <property type="match status" value="1"/>
</dbReference>
<dbReference type="PIRSF" id="PIRSF003383">
    <property type="entry name" value="Rep_E1_papillomaV"/>
    <property type="match status" value="1"/>
</dbReference>
<dbReference type="SUPFAM" id="SSF55464">
    <property type="entry name" value="Origin of replication-binding domain, RBD-like"/>
    <property type="match status" value="1"/>
</dbReference>
<dbReference type="SUPFAM" id="SSF52540">
    <property type="entry name" value="P-loop containing nucleoside triphosphate hydrolases"/>
    <property type="match status" value="1"/>
</dbReference>
<dbReference type="PROSITE" id="PS51206">
    <property type="entry name" value="SF3_HELICASE_1"/>
    <property type="match status" value="1"/>
</dbReference>
<accession>P04014</accession>
<proteinExistence type="evidence at protein level"/>
<comment type="function">
    <text evidence="1">ATP-dependent DNA 3'-5' helicase required for initiation of viral DNA replication. It forms a complex with the viral E2 protein. The E1-E2 complex binds to the replication origin which contains binding sites for both proteins. During the initial step, a dimer of E1 interacts with a dimer of protein E2 leading to a complex that binds the viral origin of replication with high specificity. Then, a second dimer of E1 displaces the E2 dimer in an ATP-dependent manner to form the E1 tetramer. Following this, two E1 monomers are added to each half of the site, which results in the formation of two E1 trimers on the viral ori. Subsequently, two hexamers will be created. The double hexamer acts as a bi-directional helicase machinery and unwinds the viral DNA and then recruits the host DNA polymerase to start replication.</text>
</comment>
<comment type="catalytic activity">
    <reaction evidence="1">
        <text>Couples ATP hydrolysis with the unwinding of duplex DNA by translocating in the 3'-5' direction.</text>
        <dbReference type="EC" id="5.6.2.4"/>
    </reaction>
</comment>
<comment type="catalytic activity">
    <reaction evidence="1">
        <text>ATP + H2O = ADP + phosphate + H(+)</text>
        <dbReference type="Rhea" id="RHEA:13065"/>
        <dbReference type="ChEBI" id="CHEBI:15377"/>
        <dbReference type="ChEBI" id="CHEBI:15378"/>
        <dbReference type="ChEBI" id="CHEBI:30616"/>
        <dbReference type="ChEBI" id="CHEBI:43474"/>
        <dbReference type="ChEBI" id="CHEBI:456216"/>
        <dbReference type="EC" id="5.6.2.4"/>
    </reaction>
</comment>
<comment type="subunit">
    <text evidence="1">Can form hexamers. Interacts with E2 protein; this interaction increases E1 DNA binding specificity. Interacts with host DNA polymerase subunit POLA2. Interacts with host single stranded DNA-binding protein RPA1. Interacts with host TOP1; this interaction stimulates the enzymatic activity of TOP1.</text>
</comment>
<comment type="interaction">
    <interactant intactId="EBI-7014446">
        <id>P04014</id>
    </interactant>
    <interactant intactId="EBI-725224">
        <id>P07305</id>
        <label>H1-0</label>
    </interactant>
    <organismsDiffer>true</organismsDiffer>
    <experiments>2</experiments>
</comment>
<comment type="subcellular location">
    <subcellularLocation>
        <location evidence="1 3">Host nucleus</location>
    </subcellularLocation>
</comment>
<comment type="PTM">
    <text evidence="1 3">Phosphorylated.</text>
</comment>
<comment type="PTM">
    <text evidence="1">Sumoylated.</text>
</comment>
<comment type="similarity">
    <text evidence="1">Belongs to the papillomaviridae E1 protein family.</text>
</comment>
<gene>
    <name evidence="1" type="primary">E1</name>
</gene>
<evidence type="ECO:0000255" key="1">
    <source>
        <dbReference type="HAMAP-Rule" id="MF_04000"/>
    </source>
</evidence>
<evidence type="ECO:0000256" key="2">
    <source>
        <dbReference type="SAM" id="MobiDB-lite"/>
    </source>
</evidence>
<evidence type="ECO:0000269" key="3">
    <source>
    </source>
</evidence>
<evidence type="ECO:0000305" key="4">
    <source>
    </source>
</evidence>
<keyword id="KW-0067">ATP-binding</keyword>
<keyword id="KW-0235">DNA replication</keyword>
<keyword id="KW-0238">DNA-binding</keyword>
<keyword id="KW-0244">Early protein</keyword>
<keyword id="KW-0347">Helicase</keyword>
<keyword id="KW-1048">Host nucleus</keyword>
<keyword id="KW-0378">Hydrolase</keyword>
<keyword id="KW-0413">Isomerase</keyword>
<keyword id="KW-1017">Isopeptide bond</keyword>
<keyword id="KW-0547">Nucleotide-binding</keyword>
<keyword id="KW-0597">Phosphoprotein</keyword>
<keyword id="KW-1185">Reference proteome</keyword>
<keyword id="KW-0832">Ubl conjugation</keyword>
<organismHost>
    <name type="scientific">Homo sapiens</name>
    <name type="common">Human</name>
    <dbReference type="NCBI Taxonomy" id="9606"/>
</organismHost>
<protein>
    <recommendedName>
        <fullName evidence="1">Replication protein E1</fullName>
        <ecNumber evidence="1">5.6.2.4</ecNumber>
    </recommendedName>
    <alternativeName>
        <fullName evidence="1">ATP-dependent helicase E1</fullName>
    </alternativeName>
    <alternativeName>
        <fullName evidence="1">DNA 3'-5' helicase E1</fullName>
    </alternativeName>
</protein>
<sequence>MADDSGTENEGSGCTGWFMVEAIVEHTTGTQISEDEEEEVEDSGYDMVDFIDDRHITQNSVEAQALFNRQEADAHYATVQDLKRKYLGSPYVSPISNVANAVESEISPRLDAIKLTTQPKKVKRRLFETRELTDSGYGYSEVEAATQVEKHGDPENGGDGQERDTGRDIEGEGVEHREAEAVDDSTREHADTSGILELLKCKDIRSTLHGKFKDCFGLSFVDLIRPFKSDRTTCADWVVAGFGIHHSIADAFQKLIEPLSLYAHIQWLTNAWGMVLLVLIRFKVNKSRCTVARTLGTLLNIPENHMLIEPPKIQSGVRALYWFRTGISNASTVIGEAPEWITRQTVIEHSLADSQFKLTEMVQWAYDNDICEESEIAFEYAQRGDFDSNARAFLNSNMQAKYVKDCAIMCRHYKHAEMKKMSIKQWIKYRGTKVDSVGNWKPIVQFLRHQNIEFIPFLSKLKLWLHGTPKKNCIAIVGPPDTGKSCFCMSLIKFLGGTVISYVNSCSHFWLQPLTDAKVALLDDATQPCWTYMDTYMRNLLDGNPMSIDRKHRALTLIKCPPLLVTSNIDISKEEKYKYLHSRVTTFTFPNPFPFDRNGNAVYELSDANWKCFFERLSSSLDIEDSEDEEDGSNSQAFRCVPGSVVRTL</sequence>
<name>VE1_HPV11</name>